<dbReference type="EC" id="2.8.1.8" evidence="1"/>
<dbReference type="EMBL" id="CP001091">
    <property type="protein sequence ID" value="ACE62307.1"/>
    <property type="molecule type" value="Genomic_DNA"/>
</dbReference>
<dbReference type="RefSeq" id="WP_005598949.1">
    <property type="nucleotide sequence ID" value="NC_010939.1"/>
</dbReference>
<dbReference type="SMR" id="B3H2J0"/>
<dbReference type="GeneID" id="48599879"/>
<dbReference type="KEGG" id="apa:APP7_1655"/>
<dbReference type="HOGENOM" id="CLU_033144_2_1_6"/>
<dbReference type="UniPathway" id="UPA00538">
    <property type="reaction ID" value="UER00593"/>
</dbReference>
<dbReference type="Proteomes" id="UP000001226">
    <property type="component" value="Chromosome"/>
</dbReference>
<dbReference type="GO" id="GO:0005737">
    <property type="term" value="C:cytoplasm"/>
    <property type="evidence" value="ECO:0007669"/>
    <property type="project" value="UniProtKB-SubCell"/>
</dbReference>
<dbReference type="GO" id="GO:0051539">
    <property type="term" value="F:4 iron, 4 sulfur cluster binding"/>
    <property type="evidence" value="ECO:0007669"/>
    <property type="project" value="UniProtKB-UniRule"/>
</dbReference>
<dbReference type="GO" id="GO:0016992">
    <property type="term" value="F:lipoate synthase activity"/>
    <property type="evidence" value="ECO:0007669"/>
    <property type="project" value="UniProtKB-UniRule"/>
</dbReference>
<dbReference type="GO" id="GO:0046872">
    <property type="term" value="F:metal ion binding"/>
    <property type="evidence" value="ECO:0007669"/>
    <property type="project" value="UniProtKB-KW"/>
</dbReference>
<dbReference type="CDD" id="cd01335">
    <property type="entry name" value="Radical_SAM"/>
    <property type="match status" value="1"/>
</dbReference>
<dbReference type="FunFam" id="3.20.20.70:FF:000023">
    <property type="entry name" value="Lipoyl synthase"/>
    <property type="match status" value="1"/>
</dbReference>
<dbReference type="Gene3D" id="3.20.20.70">
    <property type="entry name" value="Aldolase class I"/>
    <property type="match status" value="1"/>
</dbReference>
<dbReference type="HAMAP" id="MF_00206">
    <property type="entry name" value="Lipoyl_synth"/>
    <property type="match status" value="1"/>
</dbReference>
<dbReference type="InterPro" id="IPR013785">
    <property type="entry name" value="Aldolase_TIM"/>
</dbReference>
<dbReference type="InterPro" id="IPR006638">
    <property type="entry name" value="Elp3/MiaA/NifB-like_rSAM"/>
</dbReference>
<dbReference type="InterPro" id="IPR003698">
    <property type="entry name" value="Lipoyl_synth"/>
</dbReference>
<dbReference type="InterPro" id="IPR007197">
    <property type="entry name" value="rSAM"/>
</dbReference>
<dbReference type="NCBIfam" id="TIGR00510">
    <property type="entry name" value="lipA"/>
    <property type="match status" value="1"/>
</dbReference>
<dbReference type="NCBIfam" id="NF004019">
    <property type="entry name" value="PRK05481.1"/>
    <property type="match status" value="1"/>
</dbReference>
<dbReference type="NCBIfam" id="NF009544">
    <property type="entry name" value="PRK12928.1"/>
    <property type="match status" value="1"/>
</dbReference>
<dbReference type="PANTHER" id="PTHR10949">
    <property type="entry name" value="LIPOYL SYNTHASE"/>
    <property type="match status" value="1"/>
</dbReference>
<dbReference type="PANTHER" id="PTHR10949:SF0">
    <property type="entry name" value="LIPOYL SYNTHASE, MITOCHONDRIAL"/>
    <property type="match status" value="1"/>
</dbReference>
<dbReference type="Pfam" id="PF04055">
    <property type="entry name" value="Radical_SAM"/>
    <property type="match status" value="1"/>
</dbReference>
<dbReference type="PIRSF" id="PIRSF005963">
    <property type="entry name" value="Lipoyl_synth"/>
    <property type="match status" value="1"/>
</dbReference>
<dbReference type="SFLD" id="SFLDF00271">
    <property type="entry name" value="lipoyl_synthase"/>
    <property type="match status" value="1"/>
</dbReference>
<dbReference type="SFLD" id="SFLDS00029">
    <property type="entry name" value="Radical_SAM"/>
    <property type="match status" value="1"/>
</dbReference>
<dbReference type="SMART" id="SM00729">
    <property type="entry name" value="Elp3"/>
    <property type="match status" value="1"/>
</dbReference>
<dbReference type="SUPFAM" id="SSF102114">
    <property type="entry name" value="Radical SAM enzymes"/>
    <property type="match status" value="1"/>
</dbReference>
<dbReference type="PROSITE" id="PS51918">
    <property type="entry name" value="RADICAL_SAM"/>
    <property type="match status" value="1"/>
</dbReference>
<reference key="1">
    <citation type="submission" date="2008-06" db="EMBL/GenBank/DDBJ databases">
        <title>Genome and proteome analysis of A. pleuropneumoniae serotype 7.</title>
        <authorList>
            <person name="Linke B."/>
            <person name="Buettner F."/>
            <person name="Martinez-Arias R."/>
            <person name="Goesmann A."/>
            <person name="Baltes N."/>
            <person name="Tegetmeyer H."/>
            <person name="Singh M."/>
            <person name="Gerlach G.F."/>
        </authorList>
    </citation>
    <scope>NUCLEOTIDE SEQUENCE [LARGE SCALE GENOMIC DNA]</scope>
    <source>
        <strain>AP76</strain>
    </source>
</reference>
<proteinExistence type="inferred from homology"/>
<organism>
    <name type="scientific">Actinobacillus pleuropneumoniae serotype 7 (strain AP76)</name>
    <dbReference type="NCBI Taxonomy" id="537457"/>
    <lineage>
        <taxon>Bacteria</taxon>
        <taxon>Pseudomonadati</taxon>
        <taxon>Pseudomonadota</taxon>
        <taxon>Gammaproteobacteria</taxon>
        <taxon>Pasteurellales</taxon>
        <taxon>Pasteurellaceae</taxon>
        <taxon>Actinobacillus</taxon>
    </lineage>
</organism>
<feature type="chain" id="PRO_1000099585" description="Lipoyl synthase">
    <location>
        <begin position="1"/>
        <end position="330"/>
    </location>
</feature>
<feature type="domain" description="Radical SAM core" evidence="2">
    <location>
        <begin position="89"/>
        <end position="306"/>
    </location>
</feature>
<feature type="binding site" evidence="1">
    <location>
        <position position="77"/>
    </location>
    <ligand>
        <name>[4Fe-4S] cluster</name>
        <dbReference type="ChEBI" id="CHEBI:49883"/>
        <label>1</label>
    </ligand>
</feature>
<feature type="binding site" evidence="1">
    <location>
        <position position="82"/>
    </location>
    <ligand>
        <name>[4Fe-4S] cluster</name>
        <dbReference type="ChEBI" id="CHEBI:49883"/>
        <label>1</label>
    </ligand>
</feature>
<feature type="binding site" evidence="1">
    <location>
        <position position="88"/>
    </location>
    <ligand>
        <name>[4Fe-4S] cluster</name>
        <dbReference type="ChEBI" id="CHEBI:49883"/>
        <label>1</label>
    </ligand>
</feature>
<feature type="binding site" evidence="1">
    <location>
        <position position="103"/>
    </location>
    <ligand>
        <name>[4Fe-4S] cluster</name>
        <dbReference type="ChEBI" id="CHEBI:49883"/>
        <label>2</label>
        <note>4Fe-4S-S-AdoMet</note>
    </ligand>
</feature>
<feature type="binding site" evidence="1">
    <location>
        <position position="107"/>
    </location>
    <ligand>
        <name>[4Fe-4S] cluster</name>
        <dbReference type="ChEBI" id="CHEBI:49883"/>
        <label>2</label>
        <note>4Fe-4S-S-AdoMet</note>
    </ligand>
</feature>
<feature type="binding site" evidence="1">
    <location>
        <position position="110"/>
    </location>
    <ligand>
        <name>[4Fe-4S] cluster</name>
        <dbReference type="ChEBI" id="CHEBI:49883"/>
        <label>2</label>
        <note>4Fe-4S-S-AdoMet</note>
    </ligand>
</feature>
<feature type="binding site" evidence="1">
    <location>
        <position position="317"/>
    </location>
    <ligand>
        <name>[4Fe-4S] cluster</name>
        <dbReference type="ChEBI" id="CHEBI:49883"/>
        <label>1</label>
    </ligand>
</feature>
<gene>
    <name evidence="1" type="primary">lipA</name>
    <name type="ordered locus">APP7_1655</name>
</gene>
<evidence type="ECO:0000255" key="1">
    <source>
        <dbReference type="HAMAP-Rule" id="MF_00206"/>
    </source>
</evidence>
<evidence type="ECO:0000255" key="2">
    <source>
        <dbReference type="PROSITE-ProRule" id="PRU01266"/>
    </source>
</evidence>
<protein>
    <recommendedName>
        <fullName evidence="1">Lipoyl synthase</fullName>
        <ecNumber evidence="1">2.8.1.8</ecNumber>
    </recommendedName>
    <alternativeName>
        <fullName evidence="1">Lip-syn</fullName>
        <shortName evidence="1">LS</shortName>
    </alternativeName>
    <alternativeName>
        <fullName evidence="1">Lipoate synthase</fullName>
    </alternativeName>
    <alternativeName>
        <fullName evidence="1">Lipoic acid synthase</fullName>
    </alternativeName>
    <alternativeName>
        <fullName evidence="1">Sulfur insertion protein LipA</fullName>
    </alternativeName>
</protein>
<comment type="function">
    <text evidence="1">Catalyzes the radical-mediated insertion of two sulfur atoms into the C-6 and C-8 positions of the octanoyl moiety bound to the lipoyl domains of lipoate-dependent enzymes, thereby converting the octanoylated domains into lipoylated derivatives.</text>
</comment>
<comment type="catalytic activity">
    <reaction evidence="1">
        <text>[[Fe-S] cluster scaffold protein carrying a second [4Fe-4S](2+) cluster] + N(6)-octanoyl-L-lysyl-[protein] + 2 oxidized [2Fe-2S]-[ferredoxin] + 2 S-adenosyl-L-methionine + 4 H(+) = [[Fe-S] cluster scaffold protein] + N(6)-[(R)-dihydrolipoyl]-L-lysyl-[protein] + 4 Fe(3+) + 2 hydrogen sulfide + 2 5'-deoxyadenosine + 2 L-methionine + 2 reduced [2Fe-2S]-[ferredoxin]</text>
        <dbReference type="Rhea" id="RHEA:16585"/>
        <dbReference type="Rhea" id="RHEA-COMP:9928"/>
        <dbReference type="Rhea" id="RHEA-COMP:10000"/>
        <dbReference type="Rhea" id="RHEA-COMP:10001"/>
        <dbReference type="Rhea" id="RHEA-COMP:10475"/>
        <dbReference type="Rhea" id="RHEA-COMP:14568"/>
        <dbReference type="Rhea" id="RHEA-COMP:14569"/>
        <dbReference type="ChEBI" id="CHEBI:15378"/>
        <dbReference type="ChEBI" id="CHEBI:17319"/>
        <dbReference type="ChEBI" id="CHEBI:29034"/>
        <dbReference type="ChEBI" id="CHEBI:29919"/>
        <dbReference type="ChEBI" id="CHEBI:33722"/>
        <dbReference type="ChEBI" id="CHEBI:33737"/>
        <dbReference type="ChEBI" id="CHEBI:33738"/>
        <dbReference type="ChEBI" id="CHEBI:57844"/>
        <dbReference type="ChEBI" id="CHEBI:59789"/>
        <dbReference type="ChEBI" id="CHEBI:78809"/>
        <dbReference type="ChEBI" id="CHEBI:83100"/>
        <dbReference type="EC" id="2.8.1.8"/>
    </reaction>
</comment>
<comment type="cofactor">
    <cofactor evidence="1">
        <name>[4Fe-4S] cluster</name>
        <dbReference type="ChEBI" id="CHEBI:49883"/>
    </cofactor>
    <text evidence="1">Binds 2 [4Fe-4S] clusters per subunit. One cluster is coordinated with 3 cysteines and an exchangeable S-adenosyl-L-methionine.</text>
</comment>
<comment type="pathway">
    <text evidence="1">Protein modification; protein lipoylation via endogenous pathway; protein N(6)-(lipoyl)lysine from octanoyl-[acyl-carrier-protein]: step 2/2.</text>
</comment>
<comment type="subcellular location">
    <subcellularLocation>
        <location evidence="1">Cytoplasm</location>
    </subcellularLocation>
</comment>
<comment type="similarity">
    <text evidence="1">Belongs to the radical SAM superfamily. Lipoyl synthase family.</text>
</comment>
<sequence>MTTATGTKPKKMEAFKMERGVKYRDAAKTSVIQVRNIDPDQELLPKPSWMKIKLPAASAKIDSIKHGMRRHGLHSVCEEASCPNLHECFNHGTATFMIMGAICTRRCPFCDVAHGKPLPLDPEEPRKVAETVQDMKLKYVVITSVDRDDLADRGAAHFAATVREIKALNPECKVEILVPDFRGRVEQAVEILKQNPPDVFNHNLENVPRLYREVRPGADYKWSLELLKIFKQEFPNIPTKSGLMVGLGETNEEILEVMQDLRDHGVTMLTIGQYLQPSRHHLKVERYVPPEEFDMFRSEAERMGFEHAACGPFVRSSYHADLQAKGELVK</sequence>
<keyword id="KW-0004">4Fe-4S</keyword>
<keyword id="KW-0963">Cytoplasm</keyword>
<keyword id="KW-0408">Iron</keyword>
<keyword id="KW-0411">Iron-sulfur</keyword>
<keyword id="KW-0479">Metal-binding</keyword>
<keyword id="KW-0949">S-adenosyl-L-methionine</keyword>
<keyword id="KW-0808">Transferase</keyword>
<accession>B3H2J0</accession>
<name>LIPA_ACTP7</name>